<reference key="1">
    <citation type="journal article" date="2005" name="Nature">
        <title>The map-based sequence of the rice genome.</title>
        <authorList>
            <consortium name="International rice genome sequencing project (IRGSP)"/>
        </authorList>
    </citation>
    <scope>NUCLEOTIDE SEQUENCE [LARGE SCALE GENOMIC DNA]</scope>
    <source>
        <strain>cv. Nipponbare</strain>
    </source>
</reference>
<reference key="2">
    <citation type="journal article" date="2008" name="Nucleic Acids Res.">
        <title>The rice annotation project database (RAP-DB): 2008 update.</title>
        <authorList>
            <consortium name="The rice annotation project (RAP)"/>
        </authorList>
    </citation>
    <scope>GENOME REANNOTATION</scope>
    <source>
        <strain>cv. Nipponbare</strain>
    </source>
</reference>
<reference key="3">
    <citation type="journal article" date="2013" name="Rice">
        <title>Improvement of the Oryza sativa Nipponbare reference genome using next generation sequence and optical map data.</title>
        <authorList>
            <person name="Kawahara Y."/>
            <person name="de la Bastide M."/>
            <person name="Hamilton J.P."/>
            <person name="Kanamori H."/>
            <person name="McCombie W.R."/>
            <person name="Ouyang S."/>
            <person name="Schwartz D.C."/>
            <person name="Tanaka T."/>
            <person name="Wu J."/>
            <person name="Zhou S."/>
            <person name="Childs K.L."/>
            <person name="Davidson R.M."/>
            <person name="Lin H."/>
            <person name="Quesada-Ocampo L."/>
            <person name="Vaillancourt B."/>
            <person name="Sakai H."/>
            <person name="Lee S.S."/>
            <person name="Kim J."/>
            <person name="Numa H."/>
            <person name="Itoh T."/>
            <person name="Buell C.R."/>
            <person name="Matsumoto T."/>
        </authorList>
    </citation>
    <scope>GENOME REANNOTATION</scope>
    <source>
        <strain>cv. Nipponbare</strain>
    </source>
</reference>
<reference key="4">
    <citation type="journal article" date="2005" name="PLoS Biol.">
        <title>The genomes of Oryza sativa: a history of duplications.</title>
        <authorList>
            <person name="Yu J."/>
            <person name="Wang J."/>
            <person name="Lin W."/>
            <person name="Li S."/>
            <person name="Li H."/>
            <person name="Zhou J."/>
            <person name="Ni P."/>
            <person name="Dong W."/>
            <person name="Hu S."/>
            <person name="Zeng C."/>
            <person name="Zhang J."/>
            <person name="Zhang Y."/>
            <person name="Li R."/>
            <person name="Xu Z."/>
            <person name="Li S."/>
            <person name="Li X."/>
            <person name="Zheng H."/>
            <person name="Cong L."/>
            <person name="Lin L."/>
            <person name="Yin J."/>
            <person name="Geng J."/>
            <person name="Li G."/>
            <person name="Shi J."/>
            <person name="Liu J."/>
            <person name="Lv H."/>
            <person name="Li J."/>
            <person name="Wang J."/>
            <person name="Deng Y."/>
            <person name="Ran L."/>
            <person name="Shi X."/>
            <person name="Wang X."/>
            <person name="Wu Q."/>
            <person name="Li C."/>
            <person name="Ren X."/>
            <person name="Wang J."/>
            <person name="Wang X."/>
            <person name="Li D."/>
            <person name="Liu D."/>
            <person name="Zhang X."/>
            <person name="Ji Z."/>
            <person name="Zhao W."/>
            <person name="Sun Y."/>
            <person name="Zhang Z."/>
            <person name="Bao J."/>
            <person name="Han Y."/>
            <person name="Dong L."/>
            <person name="Ji J."/>
            <person name="Chen P."/>
            <person name="Wu S."/>
            <person name="Liu J."/>
            <person name="Xiao Y."/>
            <person name="Bu D."/>
            <person name="Tan J."/>
            <person name="Yang L."/>
            <person name="Ye C."/>
            <person name="Zhang J."/>
            <person name="Xu J."/>
            <person name="Zhou Y."/>
            <person name="Yu Y."/>
            <person name="Zhang B."/>
            <person name="Zhuang S."/>
            <person name="Wei H."/>
            <person name="Liu B."/>
            <person name="Lei M."/>
            <person name="Yu H."/>
            <person name="Li Y."/>
            <person name="Xu H."/>
            <person name="Wei S."/>
            <person name="He X."/>
            <person name="Fang L."/>
            <person name="Zhang Z."/>
            <person name="Zhang Y."/>
            <person name="Huang X."/>
            <person name="Su Z."/>
            <person name="Tong W."/>
            <person name="Li J."/>
            <person name="Tong Z."/>
            <person name="Li S."/>
            <person name="Ye J."/>
            <person name="Wang L."/>
            <person name="Fang L."/>
            <person name="Lei T."/>
            <person name="Chen C.-S."/>
            <person name="Chen H.-C."/>
            <person name="Xu Z."/>
            <person name="Li H."/>
            <person name="Huang H."/>
            <person name="Zhang F."/>
            <person name="Xu H."/>
            <person name="Li N."/>
            <person name="Zhao C."/>
            <person name="Li S."/>
            <person name="Dong L."/>
            <person name="Huang Y."/>
            <person name="Li L."/>
            <person name="Xi Y."/>
            <person name="Qi Q."/>
            <person name="Li W."/>
            <person name="Zhang B."/>
            <person name="Hu W."/>
            <person name="Zhang Y."/>
            <person name="Tian X."/>
            <person name="Jiao Y."/>
            <person name="Liang X."/>
            <person name="Jin J."/>
            <person name="Gao L."/>
            <person name="Zheng W."/>
            <person name="Hao B."/>
            <person name="Liu S.-M."/>
            <person name="Wang W."/>
            <person name="Yuan L."/>
            <person name="Cao M."/>
            <person name="McDermott J."/>
            <person name="Samudrala R."/>
            <person name="Wang J."/>
            <person name="Wong G.K.-S."/>
            <person name="Yang H."/>
        </authorList>
    </citation>
    <scope>NUCLEOTIDE SEQUENCE [LARGE SCALE GENOMIC DNA]</scope>
    <source>
        <strain>cv. Nipponbare</strain>
    </source>
</reference>
<evidence type="ECO:0000250" key="1"/>
<evidence type="ECO:0000255" key="2"/>
<evidence type="ECO:0000255" key="3">
    <source>
        <dbReference type="PROSITE-ProRule" id="PRU10037"/>
    </source>
</evidence>
<evidence type="ECO:0000305" key="4"/>
<feature type="chain" id="PRO_0000409362" description="Phospholipase A1-II 1">
    <location>
        <begin position="1"/>
        <end position="393"/>
    </location>
</feature>
<feature type="coiled-coil region" evidence="2">
    <location>
        <begin position="200"/>
        <end position="220"/>
    </location>
</feature>
<feature type="active site" description="Acyl-ester intermediate" evidence="1">
    <location>
        <position position="225"/>
    </location>
</feature>
<feature type="active site" description="Charge relay system" evidence="3">
    <location>
        <position position="225"/>
    </location>
</feature>
<feature type="active site" description="Charge relay system" evidence="3">
    <location>
        <position position="284"/>
    </location>
</feature>
<feature type="active site" description="Charge relay system" evidence="3">
    <location>
        <position position="321"/>
    </location>
</feature>
<organism>
    <name type="scientific">Oryza sativa subsp. japonica</name>
    <name type="common">Rice</name>
    <dbReference type="NCBI Taxonomy" id="39947"/>
    <lineage>
        <taxon>Eukaryota</taxon>
        <taxon>Viridiplantae</taxon>
        <taxon>Streptophyta</taxon>
        <taxon>Embryophyta</taxon>
        <taxon>Tracheophyta</taxon>
        <taxon>Spermatophyta</taxon>
        <taxon>Magnoliopsida</taxon>
        <taxon>Liliopsida</taxon>
        <taxon>Poales</taxon>
        <taxon>Poaceae</taxon>
        <taxon>BOP clade</taxon>
        <taxon>Oryzoideae</taxon>
        <taxon>Oryzeae</taxon>
        <taxon>Oryzinae</taxon>
        <taxon>Oryza</taxon>
        <taxon>Oryza sativa</taxon>
    </lineage>
</organism>
<keyword id="KW-0175">Coiled coil</keyword>
<keyword id="KW-0963">Cytoplasm</keyword>
<keyword id="KW-0378">Hydrolase</keyword>
<keyword id="KW-0442">Lipid degradation</keyword>
<keyword id="KW-0443">Lipid metabolism</keyword>
<keyword id="KW-1185">Reference proteome</keyword>
<gene>
    <name type="ordered locus">Os01g0651100</name>
    <name type="ordered locus">LOC_Os01g46240</name>
    <name type="ORF">OsJ_02836</name>
</gene>
<name>PLA1_ORYSJ</name>
<sequence>MSSLRGLGNIARRWRELNGVSYWKGLLDPLDVDLRNNIINYGELSQAAYTGLNRERRSRYAGSCLFSRKDFLSRVDVSNPNLYVITKFIYAMCTVSLPDAFMIKSWSKAAWSKQSNWMGFVAVATDEGKEVLGRRDVVVAWRGTIRMVEWMDDLDISLVPASEIVRPGSADDPCVHGGWLSVYTSADPESQYNKQSARYQVLNEIKRLQDMYEHEETSITITGHSLGAALATINATDIVSNGYNKSCPVSAFVFGSPRVGNPDFQKAFDSAPDLRLLRIRNSPDVVPNWPKLGYSDAGTELMIDTGKSPYLKAPGNPLTWHDMECYMHGVAGTQGSNGGFKLEIDRDIALVNKHEDALKNEYAIPSSWWVVQNKGMVKGTDGRWHLADHEDDD</sequence>
<accession>A2ZW16</accession>
<dbReference type="EC" id="3.1.1.-"/>
<dbReference type="EMBL" id="AP008207">
    <property type="status" value="NOT_ANNOTATED_CDS"/>
    <property type="molecule type" value="Genomic_DNA"/>
</dbReference>
<dbReference type="EMBL" id="AP014957">
    <property type="status" value="NOT_ANNOTATED_CDS"/>
    <property type="molecule type" value="Genomic_DNA"/>
</dbReference>
<dbReference type="EMBL" id="CM000138">
    <property type="protein sequence ID" value="EAZ12913.1"/>
    <property type="status" value="ALT_SEQ"/>
    <property type="molecule type" value="Genomic_DNA"/>
</dbReference>
<dbReference type="RefSeq" id="XP_015638863.1">
    <property type="nucleotide sequence ID" value="XM_015783377.1"/>
</dbReference>
<dbReference type="SMR" id="A2ZW16"/>
<dbReference type="FunCoup" id="A2ZW16">
    <property type="interactions" value="54"/>
</dbReference>
<dbReference type="STRING" id="39947.A2ZW16"/>
<dbReference type="ESTHER" id="orysj-pla1">
    <property type="family name" value="Plant_phospholipase"/>
</dbReference>
<dbReference type="PaxDb" id="39947-A2ZW16"/>
<dbReference type="InParanoid" id="A2ZW16"/>
<dbReference type="OrthoDB" id="438440at2759"/>
<dbReference type="Proteomes" id="UP000000763">
    <property type="component" value="Chromosome 1"/>
</dbReference>
<dbReference type="Proteomes" id="UP000007752">
    <property type="component" value="Chromosome 1"/>
</dbReference>
<dbReference type="Proteomes" id="UP000059680">
    <property type="component" value="Chromosome 1"/>
</dbReference>
<dbReference type="GO" id="GO:0005737">
    <property type="term" value="C:cytoplasm"/>
    <property type="evidence" value="ECO:0000250"/>
    <property type="project" value="UniProtKB"/>
</dbReference>
<dbReference type="GO" id="GO:0008970">
    <property type="term" value="F:phospholipase A1 activity"/>
    <property type="evidence" value="ECO:0000250"/>
    <property type="project" value="UniProtKB"/>
</dbReference>
<dbReference type="GO" id="GO:0016042">
    <property type="term" value="P:lipid catabolic process"/>
    <property type="evidence" value="ECO:0007669"/>
    <property type="project" value="UniProtKB-KW"/>
</dbReference>
<dbReference type="CDD" id="cd00519">
    <property type="entry name" value="Lipase_3"/>
    <property type="match status" value="1"/>
</dbReference>
<dbReference type="FunFam" id="3.40.50.1820:FF:000065">
    <property type="entry name" value="Phospholipase A1-II 3"/>
    <property type="match status" value="1"/>
</dbReference>
<dbReference type="Gene3D" id="3.40.50.1820">
    <property type="entry name" value="alpha/beta hydrolase"/>
    <property type="match status" value="1"/>
</dbReference>
<dbReference type="InterPro" id="IPR029058">
    <property type="entry name" value="AB_hydrolase_fold"/>
</dbReference>
<dbReference type="InterPro" id="IPR002921">
    <property type="entry name" value="Fungal_lipase-type"/>
</dbReference>
<dbReference type="InterPro" id="IPR033556">
    <property type="entry name" value="PLA"/>
</dbReference>
<dbReference type="PANTHER" id="PTHR31828:SF6">
    <property type="entry name" value="PHOSPHOLIPASE A1-II 1"/>
    <property type="match status" value="1"/>
</dbReference>
<dbReference type="PANTHER" id="PTHR31828">
    <property type="entry name" value="PHOSPHOLIPASE A1-IIGAMMA"/>
    <property type="match status" value="1"/>
</dbReference>
<dbReference type="Pfam" id="PF01764">
    <property type="entry name" value="Lipase_3"/>
    <property type="match status" value="1"/>
</dbReference>
<dbReference type="SUPFAM" id="SSF53474">
    <property type="entry name" value="alpha/beta-Hydrolases"/>
    <property type="match status" value="1"/>
</dbReference>
<dbReference type="PROSITE" id="PS00120">
    <property type="entry name" value="LIPASE_SER"/>
    <property type="match status" value="1"/>
</dbReference>
<protein>
    <recommendedName>
        <fullName>Phospholipase A1-II 1</fullName>
        <ecNumber>3.1.1.-</ecNumber>
    </recommendedName>
</protein>
<comment type="function">
    <text evidence="1">Acylhydrolase that catalyzes the hydrolysis of phospholipids at the sn-1 position.</text>
</comment>
<comment type="subcellular location">
    <subcellularLocation>
        <location evidence="1">Cytoplasm</location>
    </subcellularLocation>
</comment>
<comment type="similarity">
    <text evidence="4">Belongs to the AB hydrolase superfamily. Lipase family.</text>
</comment>
<comment type="sequence caution" evidence="4">
    <conflict type="erroneous gene model prediction">
        <sequence resource="EMBL-CDS" id="EAZ12913"/>
    </conflict>
</comment>
<proteinExistence type="inferred from homology"/>